<name>Y185_METJA</name>
<gene>
    <name type="ordered locus">MJ0185</name>
</gene>
<evidence type="ECO:0000255" key="1"/>
<evidence type="ECO:0000305" key="2"/>
<comment type="subcellular location">
    <subcellularLocation>
        <location evidence="2">Membrane</location>
        <topology evidence="2">Single-pass membrane protein</topology>
    </subcellularLocation>
</comment>
<protein>
    <recommendedName>
        <fullName>Uncharacterized protein MJ0185</fullName>
    </recommendedName>
</protein>
<reference key="1">
    <citation type="journal article" date="1996" name="Science">
        <title>Complete genome sequence of the methanogenic archaeon, Methanococcus jannaschii.</title>
        <authorList>
            <person name="Bult C.J."/>
            <person name="White O."/>
            <person name="Olsen G.J."/>
            <person name="Zhou L."/>
            <person name="Fleischmann R.D."/>
            <person name="Sutton G.G."/>
            <person name="Blake J.A."/>
            <person name="FitzGerald L.M."/>
            <person name="Clayton R.A."/>
            <person name="Gocayne J.D."/>
            <person name="Kerlavage A.R."/>
            <person name="Dougherty B.A."/>
            <person name="Tomb J.-F."/>
            <person name="Adams M.D."/>
            <person name="Reich C.I."/>
            <person name="Overbeek R."/>
            <person name="Kirkness E.F."/>
            <person name="Weinstock K.G."/>
            <person name="Merrick J.M."/>
            <person name="Glodek A."/>
            <person name="Scott J.L."/>
            <person name="Geoghagen N.S.M."/>
            <person name="Weidman J.F."/>
            <person name="Fuhrmann J.L."/>
            <person name="Nguyen D."/>
            <person name="Utterback T.R."/>
            <person name="Kelley J.M."/>
            <person name="Peterson J.D."/>
            <person name="Sadow P.W."/>
            <person name="Hanna M.C."/>
            <person name="Cotton M.D."/>
            <person name="Roberts K.M."/>
            <person name="Hurst M.A."/>
            <person name="Kaine B.P."/>
            <person name="Borodovsky M."/>
            <person name="Klenk H.-P."/>
            <person name="Fraser C.M."/>
            <person name="Smith H.O."/>
            <person name="Woese C.R."/>
            <person name="Venter J.C."/>
        </authorList>
    </citation>
    <scope>NUCLEOTIDE SEQUENCE [LARGE SCALE GENOMIC DNA]</scope>
    <source>
        <strain>ATCC 43067 / DSM 2661 / JAL-1 / JCM 10045 / NBRC 100440</strain>
    </source>
</reference>
<keyword id="KW-0472">Membrane</keyword>
<keyword id="KW-1185">Reference proteome</keyword>
<keyword id="KW-0812">Transmembrane</keyword>
<keyword id="KW-1133">Transmembrane helix</keyword>
<feature type="chain" id="PRO_0000106734" description="Uncharacterized protein MJ0185">
    <location>
        <begin position="1"/>
        <end position="49"/>
    </location>
</feature>
<feature type="transmembrane region" description="Helical" evidence="1">
    <location>
        <begin position="22"/>
        <end position="42"/>
    </location>
</feature>
<proteinExistence type="predicted"/>
<accession>Q57644</accession>
<organism>
    <name type="scientific">Methanocaldococcus jannaschii (strain ATCC 43067 / DSM 2661 / JAL-1 / JCM 10045 / NBRC 100440)</name>
    <name type="common">Methanococcus jannaschii</name>
    <dbReference type="NCBI Taxonomy" id="243232"/>
    <lineage>
        <taxon>Archaea</taxon>
        <taxon>Methanobacteriati</taxon>
        <taxon>Methanobacteriota</taxon>
        <taxon>Methanomada group</taxon>
        <taxon>Methanococci</taxon>
        <taxon>Methanococcales</taxon>
        <taxon>Methanocaldococcaceae</taxon>
        <taxon>Methanocaldococcus</taxon>
    </lineage>
</organism>
<dbReference type="EMBL" id="L77117">
    <property type="protein sequence ID" value="AAB98182.1"/>
    <property type="molecule type" value="Genomic_DNA"/>
</dbReference>
<dbReference type="PIR" id="B64323">
    <property type="entry name" value="B64323"/>
</dbReference>
<dbReference type="SMR" id="Q57644"/>
<dbReference type="STRING" id="243232.MJ_0185"/>
<dbReference type="PaxDb" id="243232-MJ_0185"/>
<dbReference type="EnsemblBacteria" id="AAB98182">
    <property type="protein sequence ID" value="AAB98182"/>
    <property type="gene ID" value="MJ_0185"/>
</dbReference>
<dbReference type="KEGG" id="mja:MJ_0185"/>
<dbReference type="HOGENOM" id="CLU_3130849_0_0_2"/>
<dbReference type="InParanoid" id="Q57644"/>
<dbReference type="Proteomes" id="UP000000805">
    <property type="component" value="Chromosome"/>
</dbReference>
<dbReference type="GO" id="GO:0016020">
    <property type="term" value="C:membrane"/>
    <property type="evidence" value="ECO:0007669"/>
    <property type="project" value="UniProtKB-SubCell"/>
</dbReference>
<sequence>MCYGIIVMILFSLYKGLAPNSAIVGISIMIIIAIGIYLIIEYAIKKIIG</sequence>